<dbReference type="EC" id="1.1.1.27" evidence="2"/>
<dbReference type="EMBL" id="BA000033">
    <property type="protein sequence ID" value="BAB96386.1"/>
    <property type="molecule type" value="Genomic_DNA"/>
</dbReference>
<dbReference type="RefSeq" id="WP_000846637.1">
    <property type="nucleotide sequence ID" value="NC_003923.1"/>
</dbReference>
<dbReference type="SMR" id="Q8NUM9"/>
<dbReference type="KEGG" id="sam:MW2521"/>
<dbReference type="HOGENOM" id="CLU_045401_1_1_9"/>
<dbReference type="UniPathway" id="UPA00554">
    <property type="reaction ID" value="UER00611"/>
</dbReference>
<dbReference type="GO" id="GO:0005737">
    <property type="term" value="C:cytoplasm"/>
    <property type="evidence" value="ECO:0007669"/>
    <property type="project" value="UniProtKB-SubCell"/>
</dbReference>
<dbReference type="GO" id="GO:0004459">
    <property type="term" value="F:L-lactate dehydrogenase activity"/>
    <property type="evidence" value="ECO:0007669"/>
    <property type="project" value="UniProtKB-UniRule"/>
</dbReference>
<dbReference type="GO" id="GO:0006096">
    <property type="term" value="P:glycolytic process"/>
    <property type="evidence" value="ECO:0007669"/>
    <property type="project" value="UniProtKB-UniRule"/>
</dbReference>
<dbReference type="GO" id="GO:0006089">
    <property type="term" value="P:lactate metabolic process"/>
    <property type="evidence" value="ECO:0007669"/>
    <property type="project" value="TreeGrafter"/>
</dbReference>
<dbReference type="CDD" id="cd05291">
    <property type="entry name" value="HicDH_like"/>
    <property type="match status" value="1"/>
</dbReference>
<dbReference type="FunFam" id="3.40.50.720:FF:000018">
    <property type="entry name" value="Malate dehydrogenase"/>
    <property type="match status" value="1"/>
</dbReference>
<dbReference type="Gene3D" id="3.90.110.10">
    <property type="entry name" value="Lactate dehydrogenase/glycoside hydrolase, family 4, C-terminal"/>
    <property type="match status" value="1"/>
</dbReference>
<dbReference type="Gene3D" id="3.40.50.720">
    <property type="entry name" value="NAD(P)-binding Rossmann-like Domain"/>
    <property type="match status" value="1"/>
</dbReference>
<dbReference type="HAMAP" id="MF_00488">
    <property type="entry name" value="Lactate_dehydrog"/>
    <property type="match status" value="1"/>
</dbReference>
<dbReference type="InterPro" id="IPR001557">
    <property type="entry name" value="L-lactate/malate_DH"/>
</dbReference>
<dbReference type="InterPro" id="IPR011304">
    <property type="entry name" value="L-lactate_DH"/>
</dbReference>
<dbReference type="InterPro" id="IPR018177">
    <property type="entry name" value="L-lactate_DH_AS"/>
</dbReference>
<dbReference type="InterPro" id="IPR022383">
    <property type="entry name" value="Lactate/malate_DH_C"/>
</dbReference>
<dbReference type="InterPro" id="IPR001236">
    <property type="entry name" value="Lactate/malate_DH_N"/>
</dbReference>
<dbReference type="InterPro" id="IPR015955">
    <property type="entry name" value="Lactate_DH/Glyco_Ohase_4_C"/>
</dbReference>
<dbReference type="InterPro" id="IPR036291">
    <property type="entry name" value="NAD(P)-bd_dom_sf"/>
</dbReference>
<dbReference type="NCBIfam" id="TIGR01771">
    <property type="entry name" value="L-LDH-NAD"/>
    <property type="match status" value="1"/>
</dbReference>
<dbReference type="NCBIfam" id="NF000824">
    <property type="entry name" value="PRK00066.1"/>
    <property type="match status" value="1"/>
</dbReference>
<dbReference type="PANTHER" id="PTHR43128">
    <property type="entry name" value="L-2-HYDROXYCARBOXYLATE DEHYDROGENASE (NAD(P)(+))"/>
    <property type="match status" value="1"/>
</dbReference>
<dbReference type="PANTHER" id="PTHR43128:SF16">
    <property type="entry name" value="L-LACTATE DEHYDROGENASE"/>
    <property type="match status" value="1"/>
</dbReference>
<dbReference type="Pfam" id="PF02866">
    <property type="entry name" value="Ldh_1_C"/>
    <property type="match status" value="1"/>
</dbReference>
<dbReference type="Pfam" id="PF00056">
    <property type="entry name" value="Ldh_1_N"/>
    <property type="match status" value="1"/>
</dbReference>
<dbReference type="PIRSF" id="PIRSF000102">
    <property type="entry name" value="Lac_mal_DH"/>
    <property type="match status" value="1"/>
</dbReference>
<dbReference type="PRINTS" id="PR00086">
    <property type="entry name" value="LLDHDRGNASE"/>
</dbReference>
<dbReference type="SUPFAM" id="SSF56327">
    <property type="entry name" value="LDH C-terminal domain-like"/>
    <property type="match status" value="1"/>
</dbReference>
<dbReference type="SUPFAM" id="SSF51735">
    <property type="entry name" value="NAD(P)-binding Rossmann-fold domains"/>
    <property type="match status" value="1"/>
</dbReference>
<dbReference type="PROSITE" id="PS00064">
    <property type="entry name" value="L_LDH"/>
    <property type="match status" value="1"/>
</dbReference>
<comment type="function">
    <text evidence="1 2">Catalyzes the conversion of lactate to pyruvate (Potential). Contributes to S.aureus growth during nitrosative stress in both aerobically and anaerobically cultured cells, despite playing a secondary role in this resistance mechanism (By similarity).</text>
</comment>
<comment type="catalytic activity">
    <reaction evidence="2">
        <text>(S)-lactate + NAD(+) = pyruvate + NADH + H(+)</text>
        <dbReference type="Rhea" id="RHEA:23444"/>
        <dbReference type="ChEBI" id="CHEBI:15361"/>
        <dbReference type="ChEBI" id="CHEBI:15378"/>
        <dbReference type="ChEBI" id="CHEBI:16651"/>
        <dbReference type="ChEBI" id="CHEBI:57540"/>
        <dbReference type="ChEBI" id="CHEBI:57945"/>
        <dbReference type="EC" id="1.1.1.27"/>
    </reaction>
</comment>
<comment type="pathway">
    <text evidence="2">Fermentation; pyruvate fermentation to lactate; (S)-lactate from pyruvate: step 1/1.</text>
</comment>
<comment type="subunit">
    <text evidence="2">Homotetramer.</text>
</comment>
<comment type="subcellular location">
    <subcellularLocation>
        <location evidence="2">Cytoplasm</location>
    </subcellularLocation>
</comment>
<comment type="similarity">
    <text evidence="2 3">Belongs to the LDH/MDH superfamily. LDH family.</text>
</comment>
<organism>
    <name type="scientific">Staphylococcus aureus (strain MW2)</name>
    <dbReference type="NCBI Taxonomy" id="196620"/>
    <lineage>
        <taxon>Bacteria</taxon>
        <taxon>Bacillati</taxon>
        <taxon>Bacillota</taxon>
        <taxon>Bacilli</taxon>
        <taxon>Bacillales</taxon>
        <taxon>Staphylococcaceae</taxon>
        <taxon>Staphylococcus</taxon>
    </lineage>
</organism>
<reference key="1">
    <citation type="journal article" date="2002" name="Lancet">
        <title>Genome and virulence determinants of high virulence community-acquired MRSA.</title>
        <authorList>
            <person name="Baba T."/>
            <person name="Takeuchi F."/>
            <person name="Kuroda M."/>
            <person name="Yuzawa H."/>
            <person name="Aoki K."/>
            <person name="Oguchi A."/>
            <person name="Nagai Y."/>
            <person name="Iwama N."/>
            <person name="Asano K."/>
            <person name="Naimi T."/>
            <person name="Kuroda H."/>
            <person name="Cui L."/>
            <person name="Yamamoto K."/>
            <person name="Hiramatsu K."/>
        </authorList>
    </citation>
    <scope>NUCLEOTIDE SEQUENCE [LARGE SCALE GENOMIC DNA]</scope>
    <source>
        <strain>MW2</strain>
    </source>
</reference>
<protein>
    <recommendedName>
        <fullName evidence="2">L-lactate dehydrogenase 2</fullName>
        <shortName evidence="2">L-LDH 2</shortName>
        <ecNumber evidence="2">1.1.1.27</ecNumber>
    </recommendedName>
</protein>
<name>LDH2_STAAW</name>
<feature type="chain" id="PRO_0000168390" description="L-lactate dehydrogenase 2">
    <location>
        <begin position="1"/>
        <end position="319"/>
    </location>
</feature>
<feature type="active site" description="Proton acceptor" evidence="2">
    <location>
        <position position="178"/>
    </location>
</feature>
<feature type="binding site" evidence="2">
    <location>
        <position position="16"/>
    </location>
    <ligand>
        <name>NAD(+)</name>
        <dbReference type="ChEBI" id="CHEBI:57540"/>
    </ligand>
</feature>
<feature type="binding site" evidence="2">
    <location>
        <position position="37"/>
    </location>
    <ligand>
        <name>NAD(+)</name>
        <dbReference type="ChEBI" id="CHEBI:57540"/>
    </ligand>
</feature>
<feature type="binding site" evidence="2">
    <location>
        <position position="42"/>
    </location>
    <ligand>
        <name>NAD(+)</name>
        <dbReference type="ChEBI" id="CHEBI:57540"/>
    </ligand>
</feature>
<feature type="binding site" evidence="2">
    <location>
        <position position="68"/>
    </location>
    <ligand>
        <name>NAD(+)</name>
        <dbReference type="ChEBI" id="CHEBI:57540"/>
    </ligand>
</feature>
<feature type="binding site" evidence="2">
    <location>
        <begin position="82"/>
        <end position="83"/>
    </location>
    <ligand>
        <name>NAD(+)</name>
        <dbReference type="ChEBI" id="CHEBI:57540"/>
    </ligand>
</feature>
<feature type="binding site" evidence="2">
    <location>
        <position position="85"/>
    </location>
    <ligand>
        <name>substrate</name>
    </ligand>
</feature>
<feature type="binding site" evidence="2">
    <location>
        <position position="91"/>
    </location>
    <ligand>
        <name>substrate</name>
    </ligand>
</feature>
<feature type="binding site" evidence="2">
    <location>
        <position position="104"/>
    </location>
    <ligand>
        <name>NAD(+)</name>
        <dbReference type="ChEBI" id="CHEBI:57540"/>
    </ligand>
</feature>
<feature type="binding site" evidence="2">
    <location>
        <begin position="121"/>
        <end position="123"/>
    </location>
    <ligand>
        <name>NAD(+)</name>
        <dbReference type="ChEBI" id="CHEBI:57540"/>
    </ligand>
</feature>
<feature type="binding site" evidence="2">
    <location>
        <begin position="123"/>
        <end position="126"/>
    </location>
    <ligand>
        <name>substrate</name>
    </ligand>
</feature>
<feature type="binding site" evidence="2">
    <location>
        <position position="146"/>
    </location>
    <ligand>
        <name>NAD(+)</name>
        <dbReference type="ChEBI" id="CHEBI:57540"/>
    </ligand>
</feature>
<feature type="binding site" evidence="2">
    <location>
        <begin position="151"/>
        <end position="154"/>
    </location>
    <ligand>
        <name>substrate</name>
    </ligand>
</feature>
<feature type="binding site" evidence="2">
    <location>
        <position position="231"/>
    </location>
    <ligand>
        <name>substrate</name>
    </ligand>
</feature>
<feature type="modified residue" description="Phosphotyrosine" evidence="2">
    <location>
        <position position="222"/>
    </location>
</feature>
<evidence type="ECO:0000250" key="1">
    <source>
        <dbReference type="UniProtKB" id="Q5HCV0"/>
    </source>
</evidence>
<evidence type="ECO:0000255" key="2">
    <source>
        <dbReference type="HAMAP-Rule" id="MF_00488"/>
    </source>
</evidence>
<evidence type="ECO:0000305" key="3"/>
<accession>Q8NUM9</accession>
<proteinExistence type="inferred from homology"/>
<sequence length="319" mass="34420">MKTFGKKVVLIGDGSVGSSYAFAMVTQGVADEFVIIDIAKDKVKADVQDLNHGTVHSPSPVDVKAGEYEDCKDADLVVITAGAPQKPGETRLQLVEKNTKIMKSIVKSVMDSGFDGYFLIAANPVDILTRFVKEYTGLPAERVIGSGTVLDSARLQYLISQELGVAPSSVDASIIGEHGDTELAVWSQANVAGISVYDTLKEQTGSEAKAEEIYVNTRDAAYEIIQAKGSTYYGIALALMRISKAILNNENNVLNVSIQLDGQYGGHKGVYLGVPTLVNQHGAVKIYEMPLSAEEQALFDKSVKTLEDTFDSIKYLLED</sequence>
<keyword id="KW-0963">Cytoplasm</keyword>
<keyword id="KW-0520">NAD</keyword>
<keyword id="KW-0560">Oxidoreductase</keyword>
<keyword id="KW-0597">Phosphoprotein</keyword>
<keyword id="KW-0346">Stress response</keyword>
<gene>
    <name evidence="2" type="primary">ldh2</name>
    <name type="synonym">ldhB</name>
    <name type="ordered locus">MW2521</name>
</gene>